<reference key="1">
    <citation type="journal article" date="1993" name="J. Bacteriol.">
        <title>Characterization of the inducible nickel and cobalt resistance determinant cnr from pMOL28 of Alcaligenes eutrophus CH34.</title>
        <authorList>
            <person name="Liesegang H."/>
            <person name="Lemke K."/>
            <person name="Siddiqui R.A."/>
            <person name="Schlegel H.-G."/>
        </authorList>
    </citation>
    <scope>NUCLEOTIDE SEQUENCE [GENOMIC DNA]</scope>
</reference>
<reference key="2">
    <citation type="submission" date="2004-10" db="EMBL/GenBank/DDBJ databases">
        <title>Sequence and features of the Ralstonia metallidurans CH34 heavy metal plasmids pMOL28 and pMOL30.</title>
        <authorList>
            <person name="van der Lelie D."/>
            <person name="Monchy S."/>
            <person name="Taghavi S."/>
            <person name="McCorkle S."/>
            <person name="Dunn J."/>
            <person name="Benotmane M."/>
            <person name="Vallaeys T."/>
            <person name="Lapidus A."/>
            <person name="Mergeay M."/>
        </authorList>
    </citation>
    <scope>NUCLEOTIDE SEQUENCE [LARGE SCALE GENOMIC DNA]</scope>
</reference>
<reference key="3">
    <citation type="journal article" date="2010" name="PLoS ONE">
        <title>The complete genome sequence of Cupriavidus metallidurans strain CH34, a master survivalist in harsh and anthropogenic environments.</title>
        <authorList>
            <person name="Janssen P.J."/>
            <person name="Van Houdt R."/>
            <person name="Moors H."/>
            <person name="Monsieurs P."/>
            <person name="Morin N."/>
            <person name="Michaux A."/>
            <person name="Benotmane M.A."/>
            <person name="Leys N."/>
            <person name="Vallaeys T."/>
            <person name="Lapidus A."/>
            <person name="Monchy S."/>
            <person name="Medigue C."/>
            <person name="Taghavi S."/>
            <person name="McCorkle S."/>
            <person name="Dunn J."/>
            <person name="van der Lelie D."/>
            <person name="Mergeay M."/>
        </authorList>
    </citation>
    <scope>NUCLEOTIDE SEQUENCE [LARGE SCALE GENOMIC DNA]</scope>
    <source>
        <strain>ATCC 43123 / DSM 2839 / NBRC 102507 / CH34</strain>
    </source>
</reference>
<reference key="4">
    <citation type="journal article" date="2000" name="J. Bacteriol.">
        <title>Regulation of the cnr cobalt and nickel resistance determinant from Ralstonia sp. strain CH34.</title>
        <authorList>
            <person name="Grass G."/>
            <person name="Grosse C."/>
            <person name="Nies D.H."/>
        </authorList>
    </citation>
    <scope>CHARACTERIZATION</scope>
    <scope>INDUCTION</scope>
    <scope>SUBCELLULAR LOCATION</scope>
</reference>
<reference key="5">
    <citation type="journal article" date="2000" name="J. Bacteriol.">
        <title>Regulation of the cnr cobalt and nickel resistance determinant of Ralstonia eutropha (Alcaligenes eutrophus) CH34.</title>
        <authorList>
            <person name="Tibazarwa C."/>
            <person name="Wuertz S."/>
            <person name="Mergeay M."/>
            <person name="Wyns L."/>
            <person name="van der Lelie D."/>
        </authorList>
    </citation>
    <scope>SUBCELLULAR LOCATION</scope>
    <scope>INDUCTION</scope>
    <scope>SUGGESTION OF NICKEL BINDING</scope>
</reference>
<proteinExistence type="evidence at protein level"/>
<sequence length="148" mass="16633">MMKSRTRRLSLSTLFGALLGVSVAAAWLYYSHRNEAGHGDLHEILHEAVPLDANEREILELKEDAFAQRRREIETRLRAANGKLADAIAKNPAWSPEVEAATQEVERAAGDLQRATLVHVFEMRAGLKPEHRPAYDRVLIDALRRGSQ</sequence>
<organism>
    <name type="scientific">Cupriavidus metallidurans (strain ATCC 43123 / DSM 2839 / NBRC 102507 / CH34)</name>
    <name type="common">Ralstonia metallidurans</name>
    <dbReference type="NCBI Taxonomy" id="266264"/>
    <lineage>
        <taxon>Bacteria</taxon>
        <taxon>Pseudomonadati</taxon>
        <taxon>Pseudomonadota</taxon>
        <taxon>Betaproteobacteria</taxon>
        <taxon>Burkholderiales</taxon>
        <taxon>Burkholderiaceae</taxon>
        <taxon>Cupriavidus</taxon>
    </lineage>
</organism>
<accession>P37975</accession>
<accession>Q5NUX1</accession>
<accession>Q7B058</accession>
<feature type="signal peptide" evidence="1">
    <location>
        <begin position="1"/>
        <end position="26"/>
    </location>
</feature>
<feature type="chain" id="PRO_0000089977" description="Nickel and cobalt resistance protein CnrR">
    <location>
        <begin position="27"/>
        <end position="148"/>
    </location>
</feature>
<feature type="topological domain" description="Periplasmic" evidence="1">
    <location>
        <begin position="28"/>
        <end position="148"/>
    </location>
</feature>
<feature type="coiled-coil region" evidence="1">
    <location>
        <begin position="54"/>
        <end position="117"/>
    </location>
</feature>
<feature type="sequence conflict" description="In Ref. 1; AAA21966/CAB82449." evidence="4" ref="1">
    <original>D</original>
    <variation>V</variation>
    <location>
        <position position="136"/>
    </location>
</feature>
<feature type="helix" evidence="5">
    <location>
        <begin position="41"/>
        <end position="48"/>
    </location>
</feature>
<feature type="helix" evidence="5">
    <location>
        <begin position="53"/>
        <end position="90"/>
    </location>
</feature>
<feature type="helix" evidence="5">
    <location>
        <begin position="96"/>
        <end position="126"/>
    </location>
</feature>
<feature type="helix" evidence="5">
    <location>
        <begin position="129"/>
        <end position="131"/>
    </location>
</feature>
<feature type="helix" evidence="5">
    <location>
        <begin position="132"/>
        <end position="144"/>
    </location>
</feature>
<keyword id="KW-0002">3D-structure</keyword>
<keyword id="KW-0170">Cobalt</keyword>
<keyword id="KW-0175">Coiled coil</keyword>
<keyword id="KW-0533">Nickel</keyword>
<keyword id="KW-0574">Periplasm</keyword>
<keyword id="KW-0614">Plasmid</keyword>
<keyword id="KW-1185">Reference proteome</keyword>
<keyword id="KW-0732">Signal</keyword>
<comment type="function">
    <text evidence="2 3">CnrH alone is able to activate cnr expression, while both CnrY and CrnR (CnrX) are needed for nickel induction of CnrH (PubMed:10671463). Has been suggested (PubMed:10671464) to bind nickel.</text>
</comment>
<comment type="subcellular location">
    <subcellularLocation>
        <location evidence="2 3">Periplasm</location>
    </subcellularLocation>
</comment>
<comment type="induction">
    <text evidence="2 3">By nickel and cobalt.</text>
</comment>
<comment type="similarity">
    <text evidence="4">To A.xylosoxydans NccX.</text>
</comment>
<geneLocation type="plasmid">
    <name>pMOL28</name>
</geneLocation>
<gene>
    <name type="primary">cnrR</name>
    <name type="synonym">cnrX</name>
    <name type="ordered locus">Rmet_6206</name>
    <name type="ORF">RMe0087</name>
</gene>
<dbReference type="EMBL" id="M91650">
    <property type="protein sequence ID" value="AAA21966.1"/>
    <property type="molecule type" value="Genomic_DNA"/>
</dbReference>
<dbReference type="EMBL" id="AJ276513">
    <property type="protein sequence ID" value="CAB82449.1"/>
    <property type="molecule type" value="Genomic_DNA"/>
</dbReference>
<dbReference type="EMBL" id="X90708">
    <property type="protein sequence ID" value="CAI30231.1"/>
    <property type="molecule type" value="Genomic_DNA"/>
</dbReference>
<dbReference type="EMBL" id="CP000355">
    <property type="protein sequence ID" value="ABF13065.1"/>
    <property type="molecule type" value="Genomic_DNA"/>
</dbReference>
<dbReference type="PIR" id="C47056">
    <property type="entry name" value="C47056"/>
</dbReference>
<dbReference type="RefSeq" id="WP_011239970.1">
    <property type="nucleotide sequence ID" value="NC_007972.2"/>
</dbReference>
<dbReference type="RefSeq" id="YP_161709.1">
    <property type="nucleotide sequence ID" value="NC_006525.1"/>
</dbReference>
<dbReference type="PDB" id="2Y39">
    <property type="method" value="X-ray"/>
    <property type="resolution" value="1.41 A"/>
    <property type="chains" value="A=31-148"/>
</dbReference>
<dbReference type="PDB" id="2Y3B">
    <property type="method" value="X-ray"/>
    <property type="resolution" value="1.55 A"/>
    <property type="chains" value="A=31-148"/>
</dbReference>
<dbReference type="PDB" id="2Y3D">
    <property type="method" value="X-ray"/>
    <property type="resolution" value="2.30 A"/>
    <property type="chains" value="A/B=31-148"/>
</dbReference>
<dbReference type="PDB" id="2Y3G">
    <property type="method" value="X-ray"/>
    <property type="resolution" value="1.91 A"/>
    <property type="chains" value="A/B/C/D=31-148"/>
</dbReference>
<dbReference type="PDB" id="2Y3H">
    <property type="method" value="X-ray"/>
    <property type="resolution" value="1.89 A"/>
    <property type="chains" value="A/B/C/D=31-148"/>
</dbReference>
<dbReference type="PDB" id="3EPV">
    <property type="method" value="X-ray"/>
    <property type="resolution" value="1.74 A"/>
    <property type="chains" value="A/B/C/D=40-148"/>
</dbReference>
<dbReference type="PDB" id="3ZG1">
    <property type="method" value="X-ray"/>
    <property type="resolution" value="1.85 A"/>
    <property type="chains" value="A/B/C/D=1-148"/>
</dbReference>
<dbReference type="PDB" id="4WWB">
    <property type="method" value="X-ray"/>
    <property type="resolution" value="1.11 A"/>
    <property type="chains" value="A=31-148"/>
</dbReference>
<dbReference type="PDB" id="4WWD">
    <property type="method" value="X-ray"/>
    <property type="resolution" value="1.30 A"/>
    <property type="chains" value="A=31-148"/>
</dbReference>
<dbReference type="PDB" id="4WWF">
    <property type="method" value="X-ray"/>
    <property type="resolution" value="1.10 A"/>
    <property type="chains" value="A/B=31-148"/>
</dbReference>
<dbReference type="PDBsum" id="2Y39"/>
<dbReference type="PDBsum" id="2Y3B"/>
<dbReference type="PDBsum" id="2Y3D"/>
<dbReference type="PDBsum" id="2Y3G"/>
<dbReference type="PDBsum" id="2Y3H"/>
<dbReference type="PDBsum" id="3EPV"/>
<dbReference type="PDBsum" id="3ZG1"/>
<dbReference type="PDBsum" id="4WWB"/>
<dbReference type="PDBsum" id="4WWD"/>
<dbReference type="PDBsum" id="4WWF"/>
<dbReference type="SMR" id="P37975"/>
<dbReference type="GeneID" id="60825776"/>
<dbReference type="KEGG" id="rme:Rmet_6206"/>
<dbReference type="HOGENOM" id="CLU_147385_0_0_4"/>
<dbReference type="EvolutionaryTrace" id="P37975"/>
<dbReference type="Proteomes" id="UP000002429">
    <property type="component" value="Plasmid pMOL28"/>
</dbReference>
<dbReference type="GO" id="GO:0042597">
    <property type="term" value="C:periplasmic space"/>
    <property type="evidence" value="ECO:0007669"/>
    <property type="project" value="UniProtKB-SubCell"/>
</dbReference>
<dbReference type="Gene3D" id="1.20.120.1490">
    <property type="match status" value="1"/>
</dbReference>
<dbReference type="InterPro" id="IPR025961">
    <property type="entry name" value="Metal_resist"/>
</dbReference>
<dbReference type="Pfam" id="PF13801">
    <property type="entry name" value="Metal_resist"/>
    <property type="match status" value="1"/>
</dbReference>
<protein>
    <recommendedName>
        <fullName>Nickel and cobalt resistance protein CnrR</fullName>
    </recommendedName>
</protein>
<evidence type="ECO:0000255" key="1"/>
<evidence type="ECO:0000269" key="2">
    <source>
    </source>
</evidence>
<evidence type="ECO:0000269" key="3">
    <source>
    </source>
</evidence>
<evidence type="ECO:0000305" key="4"/>
<evidence type="ECO:0007829" key="5">
    <source>
        <dbReference type="PDB" id="4WWF"/>
    </source>
</evidence>
<name>CNRR_CUPMC</name>